<feature type="chain" id="PRO_1000128545" description="Small ribosomal subunit protein uS14">
    <location>
        <begin position="1"/>
        <end position="101"/>
    </location>
</feature>
<sequence length="101" mass="11733">MAKKSMIEREIKRAKMVQQYAAKRASLKEITTNADLPMEQRFKAQLKLAELPRNSSATRIHNRCQLTGRPHAYYRKLKLSRIMLRELASFGQIPGMVKSSW</sequence>
<keyword id="KW-0687">Ribonucleoprotein</keyword>
<keyword id="KW-0689">Ribosomal protein</keyword>
<keyword id="KW-0694">RNA-binding</keyword>
<keyword id="KW-0699">rRNA-binding</keyword>
<name>RS14_CERS5</name>
<reference key="1">
    <citation type="submission" date="2007-04" db="EMBL/GenBank/DDBJ databases">
        <title>Complete sequence of chromosome of Rhodobacter sphaeroides ATCC 17025.</title>
        <authorList>
            <consortium name="US DOE Joint Genome Institute"/>
            <person name="Copeland A."/>
            <person name="Lucas S."/>
            <person name="Lapidus A."/>
            <person name="Barry K."/>
            <person name="Detter J.C."/>
            <person name="Glavina del Rio T."/>
            <person name="Hammon N."/>
            <person name="Israni S."/>
            <person name="Dalin E."/>
            <person name="Tice H."/>
            <person name="Pitluck S."/>
            <person name="Chertkov O."/>
            <person name="Brettin T."/>
            <person name="Bruce D."/>
            <person name="Han C."/>
            <person name="Schmutz J."/>
            <person name="Larimer F."/>
            <person name="Land M."/>
            <person name="Hauser L."/>
            <person name="Kyrpides N."/>
            <person name="Kim E."/>
            <person name="Richardson P."/>
            <person name="Mackenzie C."/>
            <person name="Choudhary M."/>
            <person name="Donohue T.J."/>
            <person name="Kaplan S."/>
        </authorList>
    </citation>
    <scope>NUCLEOTIDE SEQUENCE [LARGE SCALE GENOMIC DNA]</scope>
    <source>
        <strain>ATCC 17025 / ATH 2.4.3</strain>
    </source>
</reference>
<proteinExistence type="inferred from homology"/>
<gene>
    <name evidence="1" type="primary">rpsN</name>
    <name type="ordered locus">Rsph17025_2521</name>
</gene>
<organism>
    <name type="scientific">Cereibacter sphaeroides (strain ATCC 17025 / ATH 2.4.3)</name>
    <name type="common">Rhodobacter sphaeroides</name>
    <dbReference type="NCBI Taxonomy" id="349102"/>
    <lineage>
        <taxon>Bacteria</taxon>
        <taxon>Pseudomonadati</taxon>
        <taxon>Pseudomonadota</taxon>
        <taxon>Alphaproteobacteria</taxon>
        <taxon>Rhodobacterales</taxon>
        <taxon>Paracoccaceae</taxon>
        <taxon>Cereibacter</taxon>
    </lineage>
</organism>
<comment type="function">
    <text evidence="1">Binds 16S rRNA, required for the assembly of 30S particles and may also be responsible for determining the conformation of the 16S rRNA at the A site.</text>
</comment>
<comment type="subunit">
    <text evidence="1">Part of the 30S ribosomal subunit. Contacts proteins S3 and S10.</text>
</comment>
<comment type="similarity">
    <text evidence="1">Belongs to the universal ribosomal protein uS14 family.</text>
</comment>
<accession>A4WVJ5</accession>
<dbReference type="EMBL" id="CP000661">
    <property type="protein sequence ID" value="ABP71409.1"/>
    <property type="molecule type" value="Genomic_DNA"/>
</dbReference>
<dbReference type="SMR" id="A4WVJ5"/>
<dbReference type="STRING" id="349102.Rsph17025_2521"/>
<dbReference type="KEGG" id="rsq:Rsph17025_2521"/>
<dbReference type="eggNOG" id="COG0199">
    <property type="taxonomic scope" value="Bacteria"/>
</dbReference>
<dbReference type="HOGENOM" id="CLU_139869_0_1_5"/>
<dbReference type="BioCyc" id="RSPH349102:G1G8M-2599-MONOMER"/>
<dbReference type="GO" id="GO:0005737">
    <property type="term" value="C:cytoplasm"/>
    <property type="evidence" value="ECO:0007669"/>
    <property type="project" value="UniProtKB-ARBA"/>
</dbReference>
<dbReference type="GO" id="GO:0015935">
    <property type="term" value="C:small ribosomal subunit"/>
    <property type="evidence" value="ECO:0007669"/>
    <property type="project" value="TreeGrafter"/>
</dbReference>
<dbReference type="GO" id="GO:0019843">
    <property type="term" value="F:rRNA binding"/>
    <property type="evidence" value="ECO:0007669"/>
    <property type="project" value="UniProtKB-UniRule"/>
</dbReference>
<dbReference type="GO" id="GO:0003735">
    <property type="term" value="F:structural constituent of ribosome"/>
    <property type="evidence" value="ECO:0007669"/>
    <property type="project" value="InterPro"/>
</dbReference>
<dbReference type="GO" id="GO:0006412">
    <property type="term" value="P:translation"/>
    <property type="evidence" value="ECO:0007669"/>
    <property type="project" value="UniProtKB-UniRule"/>
</dbReference>
<dbReference type="FunFam" id="1.10.287.1480:FF:000001">
    <property type="entry name" value="30S ribosomal protein S14"/>
    <property type="match status" value="1"/>
</dbReference>
<dbReference type="Gene3D" id="1.10.287.1480">
    <property type="match status" value="1"/>
</dbReference>
<dbReference type="HAMAP" id="MF_00537">
    <property type="entry name" value="Ribosomal_uS14_1"/>
    <property type="match status" value="1"/>
</dbReference>
<dbReference type="InterPro" id="IPR001209">
    <property type="entry name" value="Ribosomal_uS14"/>
</dbReference>
<dbReference type="InterPro" id="IPR023036">
    <property type="entry name" value="Ribosomal_uS14_bac/plastid"/>
</dbReference>
<dbReference type="InterPro" id="IPR018271">
    <property type="entry name" value="Ribosomal_uS14_CS"/>
</dbReference>
<dbReference type="NCBIfam" id="NF006477">
    <property type="entry name" value="PRK08881.1"/>
    <property type="match status" value="1"/>
</dbReference>
<dbReference type="PANTHER" id="PTHR19836">
    <property type="entry name" value="30S RIBOSOMAL PROTEIN S14"/>
    <property type="match status" value="1"/>
</dbReference>
<dbReference type="PANTHER" id="PTHR19836:SF19">
    <property type="entry name" value="SMALL RIBOSOMAL SUBUNIT PROTEIN US14M"/>
    <property type="match status" value="1"/>
</dbReference>
<dbReference type="Pfam" id="PF00253">
    <property type="entry name" value="Ribosomal_S14"/>
    <property type="match status" value="1"/>
</dbReference>
<dbReference type="SUPFAM" id="SSF57716">
    <property type="entry name" value="Glucocorticoid receptor-like (DNA-binding domain)"/>
    <property type="match status" value="1"/>
</dbReference>
<dbReference type="PROSITE" id="PS00527">
    <property type="entry name" value="RIBOSOMAL_S14"/>
    <property type="match status" value="1"/>
</dbReference>
<protein>
    <recommendedName>
        <fullName evidence="1">Small ribosomal subunit protein uS14</fullName>
    </recommendedName>
    <alternativeName>
        <fullName evidence="2">30S ribosomal protein S14</fullName>
    </alternativeName>
</protein>
<evidence type="ECO:0000255" key="1">
    <source>
        <dbReference type="HAMAP-Rule" id="MF_00537"/>
    </source>
</evidence>
<evidence type="ECO:0000305" key="2"/>